<organism>
    <name type="scientific">Bacillus cereus (strain ATCC 10987 / NRS 248)</name>
    <dbReference type="NCBI Taxonomy" id="222523"/>
    <lineage>
        <taxon>Bacteria</taxon>
        <taxon>Bacillati</taxon>
        <taxon>Bacillota</taxon>
        <taxon>Bacilli</taxon>
        <taxon>Bacillales</taxon>
        <taxon>Bacillaceae</taxon>
        <taxon>Bacillus</taxon>
        <taxon>Bacillus cereus group</taxon>
    </lineage>
</organism>
<evidence type="ECO:0000255" key="1">
    <source>
        <dbReference type="HAMAP-Rule" id="MF_01521"/>
    </source>
</evidence>
<gene>
    <name evidence="1" type="primary">mntP</name>
    <name type="ordered locus">BCE_5451</name>
</gene>
<comment type="function">
    <text evidence="1">Probably functions as a manganese efflux pump.</text>
</comment>
<comment type="subcellular location">
    <subcellularLocation>
        <location evidence="1">Cell membrane</location>
        <topology evidence="1">Multi-pass membrane protein</topology>
    </subcellularLocation>
</comment>
<comment type="similarity">
    <text evidence="1">Belongs to the MntP (TC 9.B.29) family.</text>
</comment>
<reference key="1">
    <citation type="journal article" date="2004" name="Nucleic Acids Res.">
        <title>The genome sequence of Bacillus cereus ATCC 10987 reveals metabolic adaptations and a large plasmid related to Bacillus anthracis pXO1.</title>
        <authorList>
            <person name="Rasko D.A."/>
            <person name="Ravel J."/>
            <person name="Oekstad O.A."/>
            <person name="Helgason E."/>
            <person name="Cer R.Z."/>
            <person name="Jiang L."/>
            <person name="Shores K.A."/>
            <person name="Fouts D.E."/>
            <person name="Tourasse N.J."/>
            <person name="Angiuoli S.V."/>
            <person name="Kolonay J.F."/>
            <person name="Nelson W.C."/>
            <person name="Kolstoe A.-B."/>
            <person name="Fraser C.M."/>
            <person name="Read T.D."/>
        </authorList>
    </citation>
    <scope>NUCLEOTIDE SEQUENCE [LARGE SCALE GENOMIC DNA]</scope>
    <source>
        <strain>ATCC 10987 / NRS 248</strain>
    </source>
</reference>
<protein>
    <recommendedName>
        <fullName evidence="1">Putative manganese efflux pump MntP</fullName>
    </recommendedName>
</protein>
<sequence>MTFEQLIPLIIMAFALGMDAFSVSLGMGMMTLKIRQILYIGVTIGIFHIIMPFIGMVLGRFLSEQYGDIAHFAGAILLIGLGFYIVYSSILENEETRTAPIGISLFVFAFGVSIDSFSVGLSLGIYGAQTIITILLFGFVSMLLAWIGLFIGRHAKDMLGTYGEIVGGIILVGFGLYLLFPI</sequence>
<name>MNTP_BACC1</name>
<dbReference type="EMBL" id="AE017194">
    <property type="protein sequence ID" value="AAS44351.1"/>
    <property type="molecule type" value="Genomic_DNA"/>
</dbReference>
<dbReference type="KEGG" id="bca:BCE_5451"/>
<dbReference type="HOGENOM" id="CLU_096410_1_0_9"/>
<dbReference type="Proteomes" id="UP000002527">
    <property type="component" value="Chromosome"/>
</dbReference>
<dbReference type="GO" id="GO:0005886">
    <property type="term" value="C:plasma membrane"/>
    <property type="evidence" value="ECO:0007669"/>
    <property type="project" value="UniProtKB-SubCell"/>
</dbReference>
<dbReference type="GO" id="GO:0005384">
    <property type="term" value="F:manganese ion transmembrane transporter activity"/>
    <property type="evidence" value="ECO:0007669"/>
    <property type="project" value="UniProtKB-UniRule"/>
</dbReference>
<dbReference type="HAMAP" id="MF_01521">
    <property type="entry name" value="MntP_pump"/>
    <property type="match status" value="1"/>
</dbReference>
<dbReference type="InterPro" id="IPR003810">
    <property type="entry name" value="Mntp/YtaF"/>
</dbReference>
<dbReference type="InterPro" id="IPR022929">
    <property type="entry name" value="Put_MntP"/>
</dbReference>
<dbReference type="PANTHER" id="PTHR35529">
    <property type="entry name" value="MANGANESE EFFLUX PUMP MNTP-RELATED"/>
    <property type="match status" value="1"/>
</dbReference>
<dbReference type="PANTHER" id="PTHR35529:SF1">
    <property type="entry name" value="MANGANESE EFFLUX PUMP MNTP-RELATED"/>
    <property type="match status" value="1"/>
</dbReference>
<dbReference type="Pfam" id="PF02659">
    <property type="entry name" value="Mntp"/>
    <property type="match status" value="1"/>
</dbReference>
<accession>Q72XC7</accession>
<feature type="chain" id="PRO_0000155628" description="Putative manganese efflux pump MntP">
    <location>
        <begin position="1"/>
        <end position="182"/>
    </location>
</feature>
<feature type="transmembrane region" description="Helical" evidence="1">
    <location>
        <begin position="6"/>
        <end position="26"/>
    </location>
</feature>
<feature type="transmembrane region" description="Helical" evidence="1">
    <location>
        <begin position="37"/>
        <end position="57"/>
    </location>
</feature>
<feature type="transmembrane region" description="Helical" evidence="1">
    <location>
        <begin position="71"/>
        <end position="91"/>
    </location>
</feature>
<feature type="transmembrane region" description="Helical" evidence="1">
    <location>
        <begin position="101"/>
        <end position="121"/>
    </location>
</feature>
<feature type="transmembrane region" description="Helical" evidence="1">
    <location>
        <begin position="131"/>
        <end position="151"/>
    </location>
</feature>
<feature type="transmembrane region" description="Helical" evidence="1">
    <location>
        <begin position="162"/>
        <end position="182"/>
    </location>
</feature>
<proteinExistence type="inferred from homology"/>
<keyword id="KW-1003">Cell membrane</keyword>
<keyword id="KW-0406">Ion transport</keyword>
<keyword id="KW-0464">Manganese</keyword>
<keyword id="KW-0472">Membrane</keyword>
<keyword id="KW-0812">Transmembrane</keyword>
<keyword id="KW-1133">Transmembrane helix</keyword>
<keyword id="KW-0813">Transport</keyword>